<comment type="function">
    <text evidence="1">Na(+)/H(+) antiporter that extrudes sodium in exchange for external protons.</text>
</comment>
<comment type="catalytic activity">
    <reaction evidence="1">
        <text>Na(+)(in) + 2 H(+)(out) = Na(+)(out) + 2 H(+)(in)</text>
        <dbReference type="Rhea" id="RHEA:29251"/>
        <dbReference type="ChEBI" id="CHEBI:15378"/>
        <dbReference type="ChEBI" id="CHEBI:29101"/>
    </reaction>
    <physiologicalReaction direction="left-to-right" evidence="1">
        <dbReference type="Rhea" id="RHEA:29252"/>
    </physiologicalReaction>
</comment>
<comment type="subcellular location">
    <subcellularLocation>
        <location evidence="1">Cell inner membrane</location>
        <topology evidence="1">Multi-pass membrane protein</topology>
    </subcellularLocation>
</comment>
<comment type="similarity">
    <text evidence="1 2">Belongs to the NhaA Na(+)/H(+) (TC 2.A.33) antiporter family.</text>
</comment>
<protein>
    <recommendedName>
        <fullName evidence="1">Na(+)/H(+) antiporter NhaA</fullName>
    </recommendedName>
    <alternativeName>
        <fullName evidence="1">Sodium/proton antiporter NhaA</fullName>
    </alternativeName>
</protein>
<accession>Q2Y8T1</accession>
<feature type="chain" id="PRO_0000334483" description="Na(+)/H(+) antiporter NhaA">
    <location>
        <begin position="1"/>
        <end position="624"/>
    </location>
</feature>
<feature type="transmembrane region" description="Helical" evidence="1">
    <location>
        <begin position="199"/>
        <end position="219"/>
    </location>
</feature>
<feature type="transmembrane region" description="Helical" evidence="1">
    <location>
        <begin position="240"/>
        <end position="260"/>
    </location>
</feature>
<feature type="transmembrane region" description="Helical" evidence="1">
    <location>
        <begin position="279"/>
        <end position="299"/>
    </location>
</feature>
<feature type="transmembrane region" description="Helical" evidence="1">
    <location>
        <begin position="319"/>
        <end position="339"/>
    </location>
</feature>
<feature type="transmembrane region" description="Helical" evidence="1">
    <location>
        <begin position="348"/>
        <end position="368"/>
    </location>
</feature>
<feature type="transmembrane region" description="Helical" evidence="1">
    <location>
        <begin position="371"/>
        <end position="391"/>
    </location>
</feature>
<feature type="transmembrane region" description="Helical" evidence="1">
    <location>
        <begin position="407"/>
        <end position="427"/>
    </location>
</feature>
<feature type="transmembrane region" description="Helical" evidence="1">
    <location>
        <begin position="497"/>
        <end position="517"/>
    </location>
</feature>
<feature type="transmembrane region" description="Helical" evidence="1">
    <location>
        <begin position="521"/>
        <end position="541"/>
    </location>
</feature>
<feature type="transmembrane region" description="Helical" evidence="1">
    <location>
        <begin position="565"/>
        <end position="585"/>
    </location>
</feature>
<feature type="transmembrane region" description="Helical" evidence="1">
    <location>
        <begin position="596"/>
        <end position="616"/>
    </location>
</feature>
<feature type="region of interest" description="Unknown">
    <location>
        <begin position="1"/>
        <end position="164"/>
    </location>
</feature>
<feature type="region of interest" description="Na(+)/H(+) antiporter NhaA">
    <location>
        <begin position="165"/>
        <end position="624"/>
    </location>
</feature>
<proteinExistence type="inferred from homology"/>
<reference key="1">
    <citation type="submission" date="2005-08" db="EMBL/GenBank/DDBJ databases">
        <title>Complete sequence of chromosome 1 of Nitrosospira multiformis ATCC 25196.</title>
        <authorList>
            <person name="Copeland A."/>
            <person name="Lucas S."/>
            <person name="Lapidus A."/>
            <person name="Barry K."/>
            <person name="Detter J.C."/>
            <person name="Glavina T."/>
            <person name="Hammon N."/>
            <person name="Israni S."/>
            <person name="Pitluck S."/>
            <person name="Chain P."/>
            <person name="Malfatti S."/>
            <person name="Shin M."/>
            <person name="Vergez L."/>
            <person name="Schmutz J."/>
            <person name="Larimer F."/>
            <person name="Land M."/>
            <person name="Hauser L."/>
            <person name="Kyrpides N."/>
            <person name="Lykidis A."/>
            <person name="Richardson P."/>
        </authorList>
    </citation>
    <scope>NUCLEOTIDE SEQUENCE [LARGE SCALE GENOMIC DNA]</scope>
    <source>
        <strain>ATCC 25196 / NCIMB 11849 / C 71</strain>
    </source>
</reference>
<dbReference type="EMBL" id="CP000103">
    <property type="protein sequence ID" value="ABB74840.1"/>
    <property type="molecule type" value="Genomic_DNA"/>
</dbReference>
<dbReference type="RefSeq" id="WP_011380869.1">
    <property type="nucleotide sequence ID" value="NC_007614.1"/>
</dbReference>
<dbReference type="SMR" id="Q2Y8T1"/>
<dbReference type="STRING" id="323848.Nmul_A1537"/>
<dbReference type="KEGG" id="nmu:Nmul_A1537"/>
<dbReference type="eggNOG" id="COG1651">
    <property type="taxonomic scope" value="Bacteria"/>
</dbReference>
<dbReference type="eggNOG" id="COG3004">
    <property type="taxonomic scope" value="Bacteria"/>
</dbReference>
<dbReference type="HOGENOM" id="CLU_015803_4_0_4"/>
<dbReference type="OrthoDB" id="9808135at2"/>
<dbReference type="Proteomes" id="UP000002718">
    <property type="component" value="Chromosome"/>
</dbReference>
<dbReference type="GO" id="GO:0005886">
    <property type="term" value="C:plasma membrane"/>
    <property type="evidence" value="ECO:0007669"/>
    <property type="project" value="UniProtKB-SubCell"/>
</dbReference>
<dbReference type="GO" id="GO:0015385">
    <property type="term" value="F:sodium:proton antiporter activity"/>
    <property type="evidence" value="ECO:0007669"/>
    <property type="project" value="TreeGrafter"/>
</dbReference>
<dbReference type="GO" id="GO:0006885">
    <property type="term" value="P:regulation of pH"/>
    <property type="evidence" value="ECO:0007669"/>
    <property type="project" value="InterPro"/>
</dbReference>
<dbReference type="Gene3D" id="3.40.30.10">
    <property type="entry name" value="Glutaredoxin"/>
    <property type="match status" value="1"/>
</dbReference>
<dbReference type="Gene3D" id="1.20.1530.10">
    <property type="entry name" value="Na+/H+ antiporter like domain"/>
    <property type="match status" value="1"/>
</dbReference>
<dbReference type="HAMAP" id="MF_01844">
    <property type="entry name" value="NhaA"/>
    <property type="match status" value="1"/>
</dbReference>
<dbReference type="InterPro" id="IPR023171">
    <property type="entry name" value="Na/H_antiporter_dom_sf"/>
</dbReference>
<dbReference type="InterPro" id="IPR004670">
    <property type="entry name" value="NhaA"/>
</dbReference>
<dbReference type="InterPro" id="IPR012336">
    <property type="entry name" value="Thioredoxin-like_fold"/>
</dbReference>
<dbReference type="InterPro" id="IPR036249">
    <property type="entry name" value="Thioredoxin-like_sf"/>
</dbReference>
<dbReference type="NCBIfam" id="TIGR00773">
    <property type="entry name" value="NhaA"/>
    <property type="match status" value="1"/>
</dbReference>
<dbReference type="PANTHER" id="PTHR30341:SF0">
    <property type="entry name" value="NA(+)_H(+) ANTIPORTER NHAA"/>
    <property type="match status" value="1"/>
</dbReference>
<dbReference type="PANTHER" id="PTHR30341">
    <property type="entry name" value="SODIUM ION/PROTON ANTIPORTER NHAA-RELATED"/>
    <property type="match status" value="1"/>
</dbReference>
<dbReference type="Pfam" id="PF06965">
    <property type="entry name" value="Na_H_antiport_1"/>
    <property type="match status" value="1"/>
</dbReference>
<dbReference type="Pfam" id="PF13462">
    <property type="entry name" value="Thioredoxin_4"/>
    <property type="match status" value="1"/>
</dbReference>
<dbReference type="SUPFAM" id="SSF52833">
    <property type="entry name" value="Thioredoxin-like"/>
    <property type="match status" value="1"/>
</dbReference>
<keyword id="KW-0050">Antiport</keyword>
<keyword id="KW-0997">Cell inner membrane</keyword>
<keyword id="KW-1003">Cell membrane</keyword>
<keyword id="KW-0406">Ion transport</keyword>
<keyword id="KW-0472">Membrane</keyword>
<keyword id="KW-1185">Reference proteome</keyword>
<keyword id="KW-0915">Sodium</keyword>
<keyword id="KW-0739">Sodium transport</keyword>
<keyword id="KW-0812">Transmembrane</keyword>
<keyword id="KW-1133">Transmembrane helix</keyword>
<keyword id="KW-0813">Transport</keyword>
<evidence type="ECO:0000255" key="1">
    <source>
        <dbReference type="HAMAP-Rule" id="MF_01844"/>
    </source>
</evidence>
<evidence type="ECO:0000305" key="2"/>
<name>NHAA_NITMU</name>
<gene>
    <name evidence="1" type="primary">nhaA</name>
    <name type="ordered locus">Nmul_A1537</name>
</gene>
<sequence length="624" mass="66846">MNPELPPNHLDKPVDDAYDHTLGPADAEITLVEYGSYADAPSRSAHERVAELRSRFGNRMRYVFRHRPLAGSKIARRAAELVESHNNSGRFWDLHVALMSRSDKLSADDLCTIISDLKLEGNKEAGQEETAERARDRVEADIASANASGVIVTPTFFINGRRYDGPWDVRSLSEAMLGSLGHVVHAAALDFAKWAPSTGIMLLLATALAVVLSNSALGPDFNEMWEQRLGITFQHSAFELSLRHWINDGLLVIFFLVVGLEIKREFTVGHLAERQSAMLPIAAAIGGMAVPALLYLILVPPGPPMAPGSDGTDGAWSYGWGVPMATDTAFAIALIAMMGKRVPVELRVFLTAAAIVDDIGAIIVVAIFYSGELHIAYLGSAVAIAGLLALLNKGGVYRASPYVILGIVLWVFVYASGIHATLAGIILALFIPTRPPPNLRALMLQADAILTAETRRGREVMHYGPSEPALEALDAIHDRLESPAARMLRHLAPRSSFLVLPVFALANAGVVVETSVFGEHIPLMLGTATALVIGKPLGFITATVTAVRLGFATKPDAYSWRQLGGAGALAGIGFTMSLFIASQAFPEVSDYAAAKIAIFGGSILSAIIGVAILWNAQAEEEKNP</sequence>
<organism>
    <name type="scientific">Nitrosospira multiformis (strain ATCC 25196 / NCIMB 11849 / C 71)</name>
    <dbReference type="NCBI Taxonomy" id="323848"/>
    <lineage>
        <taxon>Bacteria</taxon>
        <taxon>Pseudomonadati</taxon>
        <taxon>Pseudomonadota</taxon>
        <taxon>Betaproteobacteria</taxon>
        <taxon>Nitrosomonadales</taxon>
        <taxon>Nitrosomonadaceae</taxon>
        <taxon>Nitrosospira</taxon>
    </lineage>
</organism>